<evidence type="ECO:0000250" key="1"/>
<evidence type="ECO:0000256" key="2">
    <source>
        <dbReference type="SAM" id="MobiDB-lite"/>
    </source>
</evidence>
<evidence type="ECO:0000305" key="3"/>
<name>MVP_BYDVR</name>
<gene>
    <name type="ORF">ORF4</name>
</gene>
<protein>
    <recommendedName>
        <fullName>Movement protein</fullName>
        <shortName>MP</shortName>
    </recommendedName>
    <alternativeName>
        <fullName>17 kDa protein</fullName>
    </alternativeName>
</protein>
<keyword id="KW-0813">Transport</keyword>
<keyword id="KW-0916">Viral movement protein</keyword>
<comment type="function">
    <text evidence="1">Transports viral genome to neighboring plant cells directly through plasmosdesmata, without any budding. The movement protein allows efficient cell to cell propagation, by bypassing the host cell wall barrier (By similarity).</text>
</comment>
<comment type="similarity">
    <text evidence="3">Belongs to the luteoviruses movement protein family.</text>
</comment>
<reference key="1">
    <citation type="journal article" date="1990" name="J. Gen. Virol.">
        <title>Nucleotide sequences of coat protein genes for three isolates of barley yellow dwarf virus and their relationships to other luteovirus coat protein sequences.</title>
        <authorList>
            <person name="Vincent J.R."/>
            <person name="Ueng P.P."/>
            <person name="Lister R.M."/>
            <person name="Larkins B.A."/>
        </authorList>
    </citation>
    <scope>NUCLEOTIDE SEQUENCE [GENOMIC RNA]</scope>
</reference>
<reference key="2">
    <citation type="journal article" date="1992" name="J. Gen. Virol.">
        <title>Nucleotide sequence analysis of the genomes of the MAV-PS1 and P-PAV isolates of barley yellow dwarf virus.</title>
        <authorList>
            <person name="Ueng P.P."/>
            <person name="Vincent J.R."/>
            <person name="Kawata E.E."/>
            <person name="Lei C.H."/>
            <person name="Lister R.M."/>
            <person name="Larkins B.A."/>
        </authorList>
    </citation>
    <scope>NUCLEOTIDE SEQUENCE [GENOMIC RNA]</scope>
</reference>
<accession>P29047</accession>
<sequence length="153" mass="17123">MAQEGGAVEQFGQWLWSNPIEQDPDDEMVDAREEEGQILYLDQQAGLRYSYSQSTTLKPTPPGQSNSAPVYRNAQRFQTEYLSPTTVTRSQVSVLSLSHTRPQLRPALSLLNSTPRANNQPWVATLIPSQSAGPPQRSSEPKRLTGRNSRNQR</sequence>
<organismHost>
    <name type="scientific">Avena byzantina</name>
    <dbReference type="NCBI Taxonomy" id="146531"/>
</organismHost>
<organismHost>
    <name type="scientific">Avena sativa</name>
    <name type="common">Oat</name>
    <dbReference type="NCBI Taxonomy" id="4498"/>
</organismHost>
<organismHost>
    <name type="scientific">Hordeum vulgare</name>
    <name type="common">Barley</name>
    <dbReference type="NCBI Taxonomy" id="4513"/>
</organismHost>
<organismHost>
    <name type="scientific">Lolium multiflorum</name>
    <name type="common">Italian ryegrass</name>
    <name type="synonym">Lolium perenne subsp. multiflorum</name>
    <dbReference type="NCBI Taxonomy" id="4521"/>
</organismHost>
<organismHost>
    <name type="scientific">Lolium perenne</name>
    <name type="common">Perennial ryegrass</name>
    <dbReference type="NCBI Taxonomy" id="4522"/>
</organismHost>
<organismHost>
    <name type="scientific">Oryza sativa</name>
    <name type="common">Rice</name>
    <dbReference type="NCBI Taxonomy" id="4530"/>
</organismHost>
<organismHost>
    <name type="scientific">Secale cereale</name>
    <name type="common">Rye</name>
    <dbReference type="NCBI Taxonomy" id="4550"/>
</organismHost>
<organismHost>
    <name type="scientific">Triticum aestivum</name>
    <name type="common">Wheat</name>
    <dbReference type="NCBI Taxonomy" id="4565"/>
</organismHost>
<organismHost>
    <name type="scientific">Zea mays</name>
    <name type="common">Maize</name>
    <dbReference type="NCBI Taxonomy" id="4577"/>
</organismHost>
<proteinExistence type="inferred from homology"/>
<organism>
    <name type="scientific">Barley yellow dwarf virus (isolate P-PAV)</name>
    <name type="common">BYDV</name>
    <dbReference type="NCBI Taxonomy" id="31724"/>
    <lineage>
        <taxon>Viruses</taxon>
        <taxon>Riboviria</taxon>
        <taxon>Orthornavirae</taxon>
        <taxon>Kitrinoviricota</taxon>
        <taxon>Tolucaviricetes</taxon>
        <taxon>Tolivirales</taxon>
        <taxon>Tombusviridae</taxon>
        <taxon>Regressovirinae</taxon>
        <taxon>Luteovirus</taxon>
        <taxon>Luteovirus pavhordei</taxon>
        <taxon>Barley yellow dwarf virus (isolate PAV)</taxon>
    </lineage>
</organism>
<dbReference type="EMBL" id="X17261">
    <property type="protein sequence ID" value="CAA35165.1"/>
    <property type="molecule type" value="Genomic_RNA"/>
</dbReference>
<dbReference type="EMBL" id="D11032">
    <property type="protein sequence ID" value="BAA01788.1"/>
    <property type="molecule type" value="Genomic_RNA"/>
</dbReference>
<dbReference type="GO" id="GO:0046740">
    <property type="term" value="P:transport of virus in host, cell to cell"/>
    <property type="evidence" value="ECO:0007669"/>
    <property type="project" value="UniProtKB-KW"/>
</dbReference>
<dbReference type="InterPro" id="IPR001964">
    <property type="entry name" value="Luteo_VPG"/>
</dbReference>
<dbReference type="Pfam" id="PF01659">
    <property type="entry name" value="Luteo_Vpg"/>
    <property type="match status" value="1"/>
</dbReference>
<dbReference type="PRINTS" id="PR00912">
    <property type="entry name" value="LVIRUSORF5"/>
</dbReference>
<feature type="chain" id="PRO_0000222421" description="Movement protein">
    <location>
        <begin position="1"/>
        <end position="153"/>
    </location>
</feature>
<feature type="region of interest" description="Disordered" evidence="2">
    <location>
        <begin position="1"/>
        <end position="24"/>
    </location>
</feature>
<feature type="region of interest" description="Disordered" evidence="2">
    <location>
        <begin position="121"/>
        <end position="153"/>
    </location>
</feature>
<feature type="compositionally biased region" description="Polar residues" evidence="2">
    <location>
        <begin position="121"/>
        <end position="138"/>
    </location>
</feature>
<feature type="sequence variant">
    <original>P</original>
    <variation>L</variation>
    <location>
        <position position="61"/>
    </location>
</feature>